<proteinExistence type="evidence at transcript level"/>
<sequence length="70" mass="8061">MLKMGVVLFVFLVLFPLATLQLDADQPVERYAENKQLVSPYERRQIILHALGQRQCCDWQWCDGACDCCA</sequence>
<name>CM11_CONTS</name>
<comment type="subcellular location">
    <subcellularLocation>
        <location evidence="1">Secreted</location>
    </subcellularLocation>
</comment>
<comment type="tissue specificity">
    <text>Expressed by the venom duct.</text>
</comment>
<comment type="domain">
    <text>The cysteine framework is III (CC-C-C-CC). Classified in the M-3 branch, since 3 residues stand between the fourth and the fifth cysteine residues.</text>
</comment>
<comment type="similarity">
    <text evidence="3">Belongs to the conotoxin M superfamily.</text>
</comment>
<accession>Q9BH51</accession>
<feature type="signal peptide" evidence="2">
    <location>
        <begin position="1"/>
        <end position="24"/>
    </location>
</feature>
<feature type="propeptide" id="PRO_0000315539" evidence="1">
    <location>
        <begin position="25"/>
        <end position="54"/>
    </location>
</feature>
<feature type="peptide" id="PRO_0000315540" description="Conotoxin TsMLKM-011">
    <location>
        <begin position="55"/>
        <end position="70"/>
    </location>
</feature>
<feature type="disulfide bond" evidence="1">
    <location>
        <begin position="56"/>
        <end position="66"/>
    </location>
</feature>
<feature type="disulfide bond" evidence="1">
    <location>
        <begin position="57"/>
        <end position="68"/>
    </location>
</feature>
<feature type="disulfide bond" evidence="1">
    <location>
        <begin position="62"/>
        <end position="69"/>
    </location>
</feature>
<protein>
    <recommendedName>
        <fullName>Conotoxin TsMLKM-011</fullName>
    </recommendedName>
    <alternativeName>
        <fullName>Conotoxin TsMLKM-013</fullName>
    </alternativeName>
</protein>
<reference key="1">
    <citation type="journal article" date="2001" name="Mol. Biol. Evol.">
        <title>Mechanisms for evolving hypervariability: the case of conopeptides.</title>
        <authorList>
            <person name="Conticello S.G."/>
            <person name="Gilad Y."/>
            <person name="Avidan N."/>
            <person name="Ben-Asher E."/>
            <person name="Levy Z."/>
            <person name="Fainzilber M."/>
        </authorList>
    </citation>
    <scope>NUCLEOTIDE SEQUENCE [MRNA]</scope>
    <source>
        <tissue>Venom duct</tissue>
    </source>
</reference>
<keyword id="KW-1015">Disulfide bond</keyword>
<keyword id="KW-0964">Secreted</keyword>
<keyword id="KW-0732">Signal</keyword>
<keyword id="KW-0800">Toxin</keyword>
<dbReference type="EMBL" id="AF214946">
    <property type="protein sequence ID" value="AAG60374.1"/>
    <property type="molecule type" value="mRNA"/>
</dbReference>
<dbReference type="EMBL" id="AF215091">
    <property type="protein sequence ID" value="AAG60512.1"/>
    <property type="molecule type" value="mRNA"/>
</dbReference>
<dbReference type="ConoServer" id="633">
    <property type="toxin name" value="Ts3.6 precursor"/>
</dbReference>
<dbReference type="GO" id="GO:0005576">
    <property type="term" value="C:extracellular region"/>
    <property type="evidence" value="ECO:0007669"/>
    <property type="project" value="UniProtKB-SubCell"/>
</dbReference>
<dbReference type="GO" id="GO:0008200">
    <property type="term" value="F:ion channel inhibitor activity"/>
    <property type="evidence" value="ECO:0007669"/>
    <property type="project" value="InterPro"/>
</dbReference>
<dbReference type="GO" id="GO:0090729">
    <property type="term" value="F:toxin activity"/>
    <property type="evidence" value="ECO:0007669"/>
    <property type="project" value="UniProtKB-KW"/>
</dbReference>
<dbReference type="InterPro" id="IPR004214">
    <property type="entry name" value="Conotoxin"/>
</dbReference>
<dbReference type="Pfam" id="PF02950">
    <property type="entry name" value="Conotoxin"/>
    <property type="match status" value="1"/>
</dbReference>
<organism>
    <name type="scientific">Conus tessulatus</name>
    <name type="common">Tessellate cone</name>
    <dbReference type="NCBI Taxonomy" id="101317"/>
    <lineage>
        <taxon>Eukaryota</taxon>
        <taxon>Metazoa</taxon>
        <taxon>Spiralia</taxon>
        <taxon>Lophotrochozoa</taxon>
        <taxon>Mollusca</taxon>
        <taxon>Gastropoda</taxon>
        <taxon>Caenogastropoda</taxon>
        <taxon>Neogastropoda</taxon>
        <taxon>Conoidea</taxon>
        <taxon>Conidae</taxon>
        <taxon>Conus</taxon>
        <taxon>Tesselliconus</taxon>
    </lineage>
</organism>
<evidence type="ECO:0000250" key="1"/>
<evidence type="ECO:0000255" key="2"/>
<evidence type="ECO:0000305" key="3"/>